<comment type="function">
    <text evidence="1">Stabilizing subunit of the glycosylphosphatidylinositol-mannosyltransferase I complex which catalyzes the transfer of the first mannose, via an alpha-1,4 bond from a dolichol-phosphate-mannose (Dol-P-Man) to the glucosaminyl acyl phosphatidylinositol (GlcN-(acyl)PI) intermediate to generate alpha-D-Man-(1-&gt;4)-alpha-D-GlcN-(1-&gt;6)-(1-radyl,2-acyl-sn-glycero-3-phospho)-2-acyl-inositol and participates in the sixth step of the glycosylphosphatidylinositol-anchor biosynthesis. Probably acts by stabilizing the mannosyltransferase PIGM.</text>
</comment>
<comment type="pathway">
    <text evidence="1">Glycolipid biosynthesis; glycosylphosphatidylinositol-anchor biosynthesis.</text>
</comment>
<comment type="subunit">
    <text evidence="1">Part of the glycosylphosphatidylinositol-mannosyltransferase I complex that is composed of PIGM and PIGX. Interacts with PIGM; PIGX stabilizes PIGM.</text>
</comment>
<comment type="subcellular location">
    <subcellularLocation>
        <location evidence="1">Endoplasmic reticulum membrane</location>
        <topology evidence="1">Single-pass type I membrane protein</topology>
    </subcellularLocation>
</comment>
<comment type="alternative products">
    <event type="alternative splicing"/>
    <isoform>
        <id>Q8TBF5-1</id>
        <name>1</name>
        <sequence type="displayed"/>
    </isoform>
    <isoform>
        <id>Q8TBF5-2</id>
        <name>2</name>
        <sequence type="described" ref="VSP_019842"/>
    </isoform>
</comment>
<comment type="similarity">
    <text evidence="5">Belongs to the PIGX family.</text>
</comment>
<comment type="sequence caution" evidence="5">
    <conflict type="erroneous initiation">
        <sequence resource="EMBL-CDS" id="AAH22542"/>
    </conflict>
    <text>Truncated N-terminus.</text>
</comment>
<comment type="sequence caution" evidence="5">
    <conflict type="miscellaneous discrepancy">
        <sequence resource="EMBL-CDS" id="AAH22542"/>
    </conflict>
    <text>Unusual initiator. The initiator methionine is coded by a non-canonical CTG leucine codon.</text>
</comment>
<comment type="sequence caution" evidence="5">
    <conflict type="erroneous initiation">
        <sequence resource="EMBL-CDS" id="BAA91233"/>
    </conflict>
    <text>Truncated N-terminus.</text>
</comment>
<comment type="sequence caution" evidence="5">
    <conflict type="miscellaneous discrepancy">
        <sequence resource="EMBL-CDS" id="BAA91233"/>
    </conflict>
    <text>Contaminating sequence. Potential poly-A sequence.</text>
</comment>
<comment type="sequence caution" evidence="5">
    <conflict type="miscellaneous discrepancy">
        <sequence resource="EMBL-CDS" id="BAA91233"/>
    </conflict>
    <text>Unusual initiator. The initiator methionine is coded by a non-canonical CTG leucine codon.</text>
</comment>
<proteinExistence type="evidence at protein level"/>
<accession>Q8TBF5</accession>
<accession>Q9NWZ2</accession>
<keyword id="KW-0025">Alternative splicing</keyword>
<keyword id="KW-0256">Endoplasmic reticulum</keyword>
<keyword id="KW-0325">Glycoprotein</keyword>
<keyword id="KW-0337">GPI-anchor biosynthesis</keyword>
<keyword id="KW-0472">Membrane</keyword>
<keyword id="KW-1267">Proteomics identification</keyword>
<keyword id="KW-1185">Reference proteome</keyword>
<keyword id="KW-0732">Signal</keyword>
<keyword id="KW-0812">Transmembrane</keyword>
<keyword id="KW-1133">Transmembrane helix</keyword>
<dbReference type="EMBL" id="AC055725">
    <property type="status" value="NOT_ANNOTATED_CDS"/>
    <property type="molecule type" value="Genomic_DNA"/>
</dbReference>
<dbReference type="EMBL" id="BC022542">
    <property type="protein sequence ID" value="AAH22542.1"/>
    <property type="status" value="ALT_SEQ"/>
    <property type="molecule type" value="mRNA"/>
</dbReference>
<dbReference type="EMBL" id="AK000529">
    <property type="protein sequence ID" value="BAA91233.1"/>
    <property type="status" value="ALT_SEQ"/>
    <property type="molecule type" value="mRNA"/>
</dbReference>
<dbReference type="CCDS" id="CCDS3320.2">
    <molecule id="Q8TBF5-1"/>
</dbReference>
<dbReference type="CCDS" id="CCDS54701.1">
    <molecule id="Q8TBF5-2"/>
</dbReference>
<dbReference type="RefSeq" id="NP_001159776.1">
    <molecule id="Q8TBF5-2"/>
    <property type="nucleotide sequence ID" value="NM_001166304.2"/>
</dbReference>
<dbReference type="RefSeq" id="NP_060331.3">
    <molecule id="Q8TBF5-1"/>
    <property type="nucleotide sequence ID" value="NM_017861.4"/>
</dbReference>
<dbReference type="BioGRID" id="120303">
    <property type="interactions" value="11"/>
</dbReference>
<dbReference type="ComplexPortal" id="CPX-2697">
    <property type="entry name" value="Glycosylphosphatidylinositol-mannosyltransferase I complex"/>
</dbReference>
<dbReference type="FunCoup" id="Q8TBF5">
    <property type="interactions" value="556"/>
</dbReference>
<dbReference type="IntAct" id="Q8TBF5">
    <property type="interactions" value="3"/>
</dbReference>
<dbReference type="STRING" id="9606.ENSP00000296333"/>
<dbReference type="GlyCosmos" id="Q8TBF5">
    <property type="glycosylation" value="1 site, No reported glycans"/>
</dbReference>
<dbReference type="GlyGen" id="Q8TBF5">
    <property type="glycosylation" value="3 sites, 2 N-linked glycans (1 site), 1 O-linked glycan (2 sites)"/>
</dbReference>
<dbReference type="iPTMnet" id="Q8TBF5"/>
<dbReference type="PhosphoSitePlus" id="Q8TBF5"/>
<dbReference type="SwissPalm" id="Q8TBF5"/>
<dbReference type="BioMuta" id="PIGX"/>
<dbReference type="DMDM" id="229463032"/>
<dbReference type="jPOST" id="Q8TBF5"/>
<dbReference type="MassIVE" id="Q8TBF5"/>
<dbReference type="PaxDb" id="9606-ENSP00000296333"/>
<dbReference type="PeptideAtlas" id="Q8TBF5"/>
<dbReference type="ProteomicsDB" id="74011">
    <molecule id="Q8TBF5-1"/>
</dbReference>
<dbReference type="ProteomicsDB" id="74012">
    <molecule id="Q8TBF5-2"/>
</dbReference>
<dbReference type="Pumba" id="Q8TBF5"/>
<dbReference type="Antibodypedia" id="33945">
    <property type="antibodies" value="138 antibodies from 24 providers"/>
</dbReference>
<dbReference type="DNASU" id="54965"/>
<dbReference type="Ensembl" id="ENST00000296333.10">
    <molecule id="Q8TBF5-2"/>
    <property type="protein sequence ID" value="ENSP00000296333.6"/>
    <property type="gene ID" value="ENSG00000163964.18"/>
</dbReference>
<dbReference type="Ensembl" id="ENST00000392391.9">
    <molecule id="Q8TBF5-1"/>
    <property type="protein sequence ID" value="ENSP00000376192.4"/>
    <property type="gene ID" value="ENSG00000163964.18"/>
</dbReference>
<dbReference type="GeneID" id="54965"/>
<dbReference type="KEGG" id="hsa:54965"/>
<dbReference type="MANE-Select" id="ENST00000392391.9">
    <property type="protein sequence ID" value="ENSP00000376192.4"/>
    <property type="RefSeq nucleotide sequence ID" value="NM_017861.4"/>
    <property type="RefSeq protein sequence ID" value="NP_060331.3"/>
</dbReference>
<dbReference type="UCSC" id="uc003fwx.6">
    <molecule id="Q8TBF5-1"/>
    <property type="organism name" value="human"/>
</dbReference>
<dbReference type="AGR" id="HGNC:26046"/>
<dbReference type="CTD" id="54965"/>
<dbReference type="DisGeNET" id="54965"/>
<dbReference type="GeneCards" id="PIGX"/>
<dbReference type="HGNC" id="HGNC:26046">
    <property type="gene designation" value="PIGX"/>
</dbReference>
<dbReference type="HPA" id="ENSG00000163964">
    <property type="expression patterns" value="Low tissue specificity"/>
</dbReference>
<dbReference type="MalaCards" id="PIGX"/>
<dbReference type="MIM" id="610276">
    <property type="type" value="gene"/>
</dbReference>
<dbReference type="neXtProt" id="NX_Q8TBF5"/>
<dbReference type="OpenTargets" id="ENSG00000163964"/>
<dbReference type="PharmGKB" id="PA134928970"/>
<dbReference type="VEuPathDB" id="HostDB:ENSG00000163964"/>
<dbReference type="eggNOG" id="ENOG502S32M">
    <property type="taxonomic scope" value="Eukaryota"/>
</dbReference>
<dbReference type="GeneTree" id="ENSGT00390000017679"/>
<dbReference type="HOGENOM" id="CLU_076787_0_0_1"/>
<dbReference type="InParanoid" id="Q8TBF5"/>
<dbReference type="OMA" id="ALSKYMW"/>
<dbReference type="OrthoDB" id="5546453at2759"/>
<dbReference type="PAN-GO" id="Q8TBF5">
    <property type="GO annotations" value="0 GO annotations based on evolutionary models"/>
</dbReference>
<dbReference type="PhylomeDB" id="Q8TBF5"/>
<dbReference type="PathwayCommons" id="Q8TBF5"/>
<dbReference type="Reactome" id="R-HSA-162710">
    <property type="pathway name" value="Synthesis of glycosylphosphatidylinositol (GPI)"/>
</dbReference>
<dbReference type="SignaLink" id="Q8TBF5"/>
<dbReference type="UniPathway" id="UPA00196"/>
<dbReference type="BioGRID-ORCS" id="54965">
    <property type="hits" value="21 hits in 1085 CRISPR screens"/>
</dbReference>
<dbReference type="ChiTaRS" id="PIGX">
    <property type="organism name" value="human"/>
</dbReference>
<dbReference type="GenomeRNAi" id="54965"/>
<dbReference type="Pharos" id="Q8TBF5">
    <property type="development level" value="Tdark"/>
</dbReference>
<dbReference type="PRO" id="PR:Q8TBF5"/>
<dbReference type="Proteomes" id="UP000005640">
    <property type="component" value="Chromosome 3"/>
</dbReference>
<dbReference type="RNAct" id="Q8TBF5">
    <property type="molecule type" value="protein"/>
</dbReference>
<dbReference type="Bgee" id="ENSG00000163964">
    <property type="expression patterns" value="Expressed in ventricular zone and 180 other cell types or tissues"/>
</dbReference>
<dbReference type="ExpressionAtlas" id="Q8TBF5">
    <property type="expression patterns" value="baseline and differential"/>
</dbReference>
<dbReference type="GO" id="GO:0005789">
    <property type="term" value="C:endoplasmic reticulum membrane"/>
    <property type="evidence" value="ECO:0000304"/>
    <property type="project" value="Reactome"/>
</dbReference>
<dbReference type="GO" id="GO:0006506">
    <property type="term" value="P:GPI anchor biosynthetic process"/>
    <property type="evidence" value="ECO:0007669"/>
    <property type="project" value="UniProtKB-UniPathway"/>
</dbReference>
<dbReference type="InterPro" id="IPR013233">
    <property type="entry name" value="PIG-X/PBN1"/>
</dbReference>
<dbReference type="InterPro" id="IPR040039">
    <property type="entry name" value="PIGX"/>
</dbReference>
<dbReference type="PANTHER" id="PTHR28650">
    <property type="entry name" value="PHOSPHATIDYLINOSITOL-GLYCAN BIOSYNTHESIS CLASS X PROTEIN"/>
    <property type="match status" value="1"/>
</dbReference>
<dbReference type="PANTHER" id="PTHR28650:SF1">
    <property type="entry name" value="PHOSPHATIDYLINOSITOL-GLYCAN BIOSYNTHESIS CLASS X PROTEIN"/>
    <property type="match status" value="1"/>
</dbReference>
<dbReference type="Pfam" id="PF08320">
    <property type="entry name" value="PIG-X"/>
    <property type="match status" value="1"/>
</dbReference>
<dbReference type="SMART" id="SM00780">
    <property type="entry name" value="PIG-X"/>
    <property type="match status" value="1"/>
</dbReference>
<sequence>MAARVAAVRAAAWLLLGAATGLTRGPAAAFTAARSDAGIRAMCSEIILRQEVLKDGFHRDLLIKVKFGESIEDLHTCRLLIKQDIPAGLYVDPYELASLRERNITEAVMVSENFDIEAPNYLSKESEVLIYARRDSQCIDCFQAFLPVHCRYHRPHSEDGEASIVVNNPDLLMFCDQEFPILKCWAHSEVAAPCALENEDICQWNKMKYKSVYKNVILQVPVGLTVHTSLVCSVTLLITILCSTLILVAVFKYGHFSL</sequence>
<gene>
    <name evidence="6" type="primary">PIGX</name>
</gene>
<reference key="1">
    <citation type="journal article" date="2006" name="Nature">
        <title>The DNA sequence, annotation and analysis of human chromosome 3.</title>
        <authorList>
            <person name="Muzny D.M."/>
            <person name="Scherer S.E."/>
            <person name="Kaul R."/>
            <person name="Wang J."/>
            <person name="Yu J."/>
            <person name="Sudbrak R."/>
            <person name="Buhay C.J."/>
            <person name="Chen R."/>
            <person name="Cree A."/>
            <person name="Ding Y."/>
            <person name="Dugan-Rocha S."/>
            <person name="Gill R."/>
            <person name="Gunaratne P."/>
            <person name="Harris R.A."/>
            <person name="Hawes A.C."/>
            <person name="Hernandez J."/>
            <person name="Hodgson A.V."/>
            <person name="Hume J."/>
            <person name="Jackson A."/>
            <person name="Khan Z.M."/>
            <person name="Kovar-Smith C."/>
            <person name="Lewis L.R."/>
            <person name="Lozado R.J."/>
            <person name="Metzker M.L."/>
            <person name="Milosavljevic A."/>
            <person name="Miner G.R."/>
            <person name="Morgan M.B."/>
            <person name="Nazareth L.V."/>
            <person name="Scott G."/>
            <person name="Sodergren E."/>
            <person name="Song X.-Z."/>
            <person name="Steffen D."/>
            <person name="Wei S."/>
            <person name="Wheeler D.A."/>
            <person name="Wright M.W."/>
            <person name="Worley K.C."/>
            <person name="Yuan Y."/>
            <person name="Zhang Z."/>
            <person name="Adams C.Q."/>
            <person name="Ansari-Lari M.A."/>
            <person name="Ayele M."/>
            <person name="Brown M.J."/>
            <person name="Chen G."/>
            <person name="Chen Z."/>
            <person name="Clendenning J."/>
            <person name="Clerc-Blankenburg K.P."/>
            <person name="Chen R."/>
            <person name="Chen Z."/>
            <person name="Davis C."/>
            <person name="Delgado O."/>
            <person name="Dinh H.H."/>
            <person name="Dong W."/>
            <person name="Draper H."/>
            <person name="Ernst S."/>
            <person name="Fu G."/>
            <person name="Gonzalez-Garay M.L."/>
            <person name="Garcia D.K."/>
            <person name="Gillett W."/>
            <person name="Gu J."/>
            <person name="Hao B."/>
            <person name="Haugen E."/>
            <person name="Havlak P."/>
            <person name="He X."/>
            <person name="Hennig S."/>
            <person name="Hu S."/>
            <person name="Huang W."/>
            <person name="Jackson L.R."/>
            <person name="Jacob L.S."/>
            <person name="Kelly S.H."/>
            <person name="Kube M."/>
            <person name="Levy R."/>
            <person name="Li Z."/>
            <person name="Liu B."/>
            <person name="Liu J."/>
            <person name="Liu W."/>
            <person name="Lu J."/>
            <person name="Maheshwari M."/>
            <person name="Nguyen B.-V."/>
            <person name="Okwuonu G.O."/>
            <person name="Palmeiri A."/>
            <person name="Pasternak S."/>
            <person name="Perez L.M."/>
            <person name="Phelps K.A."/>
            <person name="Plopper F.J."/>
            <person name="Qiang B."/>
            <person name="Raymond C."/>
            <person name="Rodriguez R."/>
            <person name="Saenphimmachak C."/>
            <person name="Santibanez J."/>
            <person name="Shen H."/>
            <person name="Shen Y."/>
            <person name="Subramanian S."/>
            <person name="Tabor P.E."/>
            <person name="Verduzco D."/>
            <person name="Waldron L."/>
            <person name="Wang J."/>
            <person name="Wang J."/>
            <person name="Wang Q."/>
            <person name="Williams G.A."/>
            <person name="Wong G.K.-S."/>
            <person name="Yao Z."/>
            <person name="Zhang J."/>
            <person name="Zhang X."/>
            <person name="Zhao G."/>
            <person name="Zhou J."/>
            <person name="Zhou Y."/>
            <person name="Nelson D."/>
            <person name="Lehrach H."/>
            <person name="Reinhardt R."/>
            <person name="Naylor S.L."/>
            <person name="Yang H."/>
            <person name="Olson M."/>
            <person name="Weinstock G."/>
            <person name="Gibbs R.A."/>
        </authorList>
    </citation>
    <scope>NUCLEOTIDE SEQUENCE [LARGE SCALE GENOMIC DNA]</scope>
</reference>
<reference key="2">
    <citation type="journal article" date="2004" name="Genome Res.">
        <title>The status, quality, and expansion of the NIH full-length cDNA project: the Mammalian Gene Collection (MGC).</title>
        <authorList>
            <consortium name="The MGC Project Team"/>
        </authorList>
    </citation>
    <scope>NUCLEOTIDE SEQUENCE [LARGE SCALE MRNA] (ISOFORM 1)</scope>
    <scope>VARIANT ASP-197</scope>
    <source>
        <tissue>Brain</tissue>
    </source>
</reference>
<reference key="3">
    <citation type="journal article" date="2004" name="Nat. Genet.">
        <title>Complete sequencing and characterization of 21,243 full-length human cDNAs.</title>
        <authorList>
            <person name="Ota T."/>
            <person name="Suzuki Y."/>
            <person name="Nishikawa T."/>
            <person name="Otsuki T."/>
            <person name="Sugiyama T."/>
            <person name="Irie R."/>
            <person name="Wakamatsu A."/>
            <person name="Hayashi K."/>
            <person name="Sato H."/>
            <person name="Nagai K."/>
            <person name="Kimura K."/>
            <person name="Makita H."/>
            <person name="Sekine M."/>
            <person name="Obayashi M."/>
            <person name="Nishi T."/>
            <person name="Shibahara T."/>
            <person name="Tanaka T."/>
            <person name="Ishii S."/>
            <person name="Yamamoto J."/>
            <person name="Saito K."/>
            <person name="Kawai Y."/>
            <person name="Isono Y."/>
            <person name="Nakamura Y."/>
            <person name="Nagahari K."/>
            <person name="Murakami K."/>
            <person name="Yasuda T."/>
            <person name="Iwayanagi T."/>
            <person name="Wagatsuma M."/>
            <person name="Shiratori A."/>
            <person name="Sudo H."/>
            <person name="Hosoiri T."/>
            <person name="Kaku Y."/>
            <person name="Kodaira H."/>
            <person name="Kondo H."/>
            <person name="Sugawara M."/>
            <person name="Takahashi M."/>
            <person name="Kanda K."/>
            <person name="Yokoi T."/>
            <person name="Furuya T."/>
            <person name="Kikkawa E."/>
            <person name="Omura Y."/>
            <person name="Abe K."/>
            <person name="Kamihara K."/>
            <person name="Katsuta N."/>
            <person name="Sato K."/>
            <person name="Tanikawa M."/>
            <person name="Yamazaki M."/>
            <person name="Ninomiya K."/>
            <person name="Ishibashi T."/>
            <person name="Yamashita H."/>
            <person name="Murakawa K."/>
            <person name="Fujimori K."/>
            <person name="Tanai H."/>
            <person name="Kimata M."/>
            <person name="Watanabe M."/>
            <person name="Hiraoka S."/>
            <person name="Chiba Y."/>
            <person name="Ishida S."/>
            <person name="Ono Y."/>
            <person name="Takiguchi S."/>
            <person name="Watanabe S."/>
            <person name="Yosida M."/>
            <person name="Hotuta T."/>
            <person name="Kusano J."/>
            <person name="Kanehori K."/>
            <person name="Takahashi-Fujii A."/>
            <person name="Hara H."/>
            <person name="Tanase T.-O."/>
            <person name="Nomura Y."/>
            <person name="Togiya S."/>
            <person name="Komai F."/>
            <person name="Hara R."/>
            <person name="Takeuchi K."/>
            <person name="Arita M."/>
            <person name="Imose N."/>
            <person name="Musashino K."/>
            <person name="Yuuki H."/>
            <person name="Oshima A."/>
            <person name="Sasaki N."/>
            <person name="Aotsuka S."/>
            <person name="Yoshikawa Y."/>
            <person name="Matsunawa H."/>
            <person name="Ichihara T."/>
            <person name="Shiohata N."/>
            <person name="Sano S."/>
            <person name="Moriya S."/>
            <person name="Momiyama H."/>
            <person name="Satoh N."/>
            <person name="Takami S."/>
            <person name="Terashima Y."/>
            <person name="Suzuki O."/>
            <person name="Nakagawa S."/>
            <person name="Senoh A."/>
            <person name="Mizoguchi H."/>
            <person name="Goto Y."/>
            <person name="Shimizu F."/>
            <person name="Wakebe H."/>
            <person name="Hishigaki H."/>
            <person name="Watanabe T."/>
            <person name="Sugiyama A."/>
            <person name="Takemoto M."/>
            <person name="Kawakami B."/>
            <person name="Yamazaki M."/>
            <person name="Watanabe K."/>
            <person name="Kumagai A."/>
            <person name="Itakura S."/>
            <person name="Fukuzumi Y."/>
            <person name="Fujimori Y."/>
            <person name="Komiyama M."/>
            <person name="Tashiro H."/>
            <person name="Tanigami A."/>
            <person name="Fujiwara T."/>
            <person name="Ono T."/>
            <person name="Yamada K."/>
            <person name="Fujii Y."/>
            <person name="Ozaki K."/>
            <person name="Hirao M."/>
            <person name="Ohmori Y."/>
            <person name="Kawabata A."/>
            <person name="Hikiji T."/>
            <person name="Kobatake N."/>
            <person name="Inagaki H."/>
            <person name="Ikema Y."/>
            <person name="Okamoto S."/>
            <person name="Okitani R."/>
            <person name="Kawakami T."/>
            <person name="Noguchi S."/>
            <person name="Itoh T."/>
            <person name="Shigeta K."/>
            <person name="Senba T."/>
            <person name="Matsumura K."/>
            <person name="Nakajima Y."/>
            <person name="Mizuno T."/>
            <person name="Morinaga M."/>
            <person name="Sasaki M."/>
            <person name="Togashi T."/>
            <person name="Oyama M."/>
            <person name="Hata H."/>
            <person name="Watanabe M."/>
            <person name="Komatsu T."/>
            <person name="Mizushima-Sugano J."/>
            <person name="Satoh T."/>
            <person name="Shirai Y."/>
            <person name="Takahashi Y."/>
            <person name="Nakagawa K."/>
            <person name="Okumura K."/>
            <person name="Nagase T."/>
            <person name="Nomura N."/>
            <person name="Kikuchi H."/>
            <person name="Masuho Y."/>
            <person name="Yamashita R."/>
            <person name="Nakai K."/>
            <person name="Yada T."/>
            <person name="Nakamura Y."/>
            <person name="Ohara O."/>
            <person name="Isogai T."/>
            <person name="Sugano S."/>
        </authorList>
    </citation>
    <scope>NUCLEOTIDE SEQUENCE [LARGE SCALE MRNA] OF 1-243 (ISOFORM 2)</scope>
</reference>
<reference key="4">
    <citation type="journal article" date="2005" name="Mol. Biol. Cell">
        <title>Mammalian PIG-X and yeast Pbn1p are the essential components of glycosylphosphatidylinositol-mannosyltransferase I.</title>
        <authorList>
            <person name="Ashida H."/>
            <person name="Hong Y."/>
            <person name="Murakami Y."/>
            <person name="Shishioh N."/>
            <person name="Sugimoto N."/>
            <person name="Kim Y.U."/>
            <person name="Maeda Y."/>
            <person name="Kinoshita T."/>
        </authorList>
    </citation>
    <scope>IDENTIFICATION</scope>
    <scope>IDENTIFICATION OF THE NON-CANONICAL START CODON</scope>
</reference>
<evidence type="ECO:0000250" key="1">
    <source>
        <dbReference type="UniProtKB" id="Q60GF7"/>
    </source>
</evidence>
<evidence type="ECO:0000255" key="2"/>
<evidence type="ECO:0000269" key="3">
    <source>
    </source>
</evidence>
<evidence type="ECO:0000303" key="4">
    <source>
    </source>
</evidence>
<evidence type="ECO:0000305" key="5"/>
<evidence type="ECO:0000312" key="6">
    <source>
        <dbReference type="HGNC" id="HGNC:26046"/>
    </source>
</evidence>
<feature type="signal peptide" evidence="2">
    <location>
        <begin position="1"/>
        <end position="21"/>
    </location>
</feature>
<feature type="chain" id="PRO_0000246295" description="GPI alpha-1,4-mannosyltransferase I, stabilizing subunit">
    <location>
        <begin position="22"/>
        <end position="258"/>
    </location>
</feature>
<feature type="topological domain" description="Lumenal" evidence="2">
    <location>
        <begin position="22"/>
        <end position="230"/>
    </location>
</feature>
<feature type="transmembrane region" description="Helical" evidence="2">
    <location>
        <begin position="231"/>
        <end position="251"/>
    </location>
</feature>
<feature type="topological domain" description="Cytoplasmic" evidence="2">
    <location>
        <begin position="252"/>
        <end position="258"/>
    </location>
</feature>
<feature type="glycosylation site" description="N-linked (GlcNAc...) asparagine" evidence="2">
    <location>
        <position position="103"/>
    </location>
</feature>
<feature type="splice variant" id="VSP_019842" description="In isoform 2." evidence="4">
    <original>Q</original>
    <variation>QAGSRRMIRFRFDSFDKTI</variation>
    <location>
        <position position="177"/>
    </location>
</feature>
<feature type="sequence variant" id="VAR_027035" description="In dbSNP:rs2291397.">
    <original>P</original>
    <variation>L</variation>
    <location>
        <position position="155"/>
    </location>
</feature>
<feature type="sequence variant" id="VAR_027036" description="In dbSNP:rs17852091." evidence="3">
    <original>E</original>
    <variation>D</variation>
    <location>
        <position position="197"/>
    </location>
</feature>
<feature type="sequence conflict" description="In Ref. 2; AAH22542." evidence="5" ref="2">
    <original>A</original>
    <variation>T</variation>
    <location>
        <position position="28"/>
    </location>
</feature>
<organism>
    <name type="scientific">Homo sapiens</name>
    <name type="common">Human</name>
    <dbReference type="NCBI Taxonomy" id="9606"/>
    <lineage>
        <taxon>Eukaryota</taxon>
        <taxon>Metazoa</taxon>
        <taxon>Chordata</taxon>
        <taxon>Craniata</taxon>
        <taxon>Vertebrata</taxon>
        <taxon>Euteleostomi</taxon>
        <taxon>Mammalia</taxon>
        <taxon>Eutheria</taxon>
        <taxon>Euarchontoglires</taxon>
        <taxon>Primates</taxon>
        <taxon>Haplorrhini</taxon>
        <taxon>Catarrhini</taxon>
        <taxon>Hominidae</taxon>
        <taxon>Homo</taxon>
    </lineage>
</organism>
<name>PIGX_HUMAN</name>
<protein>
    <recommendedName>
        <fullName evidence="5">GPI alpha-1,4-mannosyltransferase I, stabilizing subunit</fullName>
    </recommendedName>
    <alternativeName>
        <fullName>Phosphatidylinositol-glycan biosynthesis class X protein</fullName>
        <shortName evidence="1">PIG-X</shortName>
    </alternativeName>
</protein>